<accession>Q5PC89</accession>
<comment type="function">
    <text evidence="1">Major determinant of cell surface composition. Negatively regulates motility, adhesion and synthesis of biofilm exopolysaccharides.</text>
</comment>
<comment type="similarity">
    <text evidence="1">Belongs to the GlgS family.</text>
</comment>
<gene>
    <name evidence="1" type="primary">glgS</name>
    <name type="ordered locus">SPA3065</name>
</gene>
<organism>
    <name type="scientific">Salmonella paratyphi A (strain ATCC 9150 / SARB42)</name>
    <dbReference type="NCBI Taxonomy" id="295319"/>
    <lineage>
        <taxon>Bacteria</taxon>
        <taxon>Pseudomonadati</taxon>
        <taxon>Pseudomonadota</taxon>
        <taxon>Gammaproteobacteria</taxon>
        <taxon>Enterobacterales</taxon>
        <taxon>Enterobacteriaceae</taxon>
        <taxon>Salmonella</taxon>
    </lineage>
</organism>
<name>GLGS_SALPA</name>
<dbReference type="EMBL" id="CP000026">
    <property type="protein sequence ID" value="AAV78900.1"/>
    <property type="molecule type" value="Genomic_DNA"/>
</dbReference>
<dbReference type="SMR" id="Q5PC89"/>
<dbReference type="KEGG" id="spt:SPA3065"/>
<dbReference type="HOGENOM" id="CLU_185971_0_0_6"/>
<dbReference type="Proteomes" id="UP000008185">
    <property type="component" value="Chromosome"/>
</dbReference>
<dbReference type="GO" id="GO:1902201">
    <property type="term" value="P:negative regulation of bacterial-type flagellum-dependent cell motility"/>
    <property type="evidence" value="ECO:0007669"/>
    <property type="project" value="UniProtKB-UniRule"/>
</dbReference>
<dbReference type="GO" id="GO:1900191">
    <property type="term" value="P:negative regulation of single-species biofilm formation"/>
    <property type="evidence" value="ECO:0007669"/>
    <property type="project" value="UniProtKB-UniRule"/>
</dbReference>
<dbReference type="Gene3D" id="1.20.970.20">
    <property type="entry name" value="Glycogen synthesis protein GlgS"/>
    <property type="match status" value="1"/>
</dbReference>
<dbReference type="HAMAP" id="MF_00525">
    <property type="entry name" value="GlgS"/>
    <property type="match status" value="1"/>
</dbReference>
<dbReference type="InterPro" id="IPR015065">
    <property type="entry name" value="GlgS"/>
</dbReference>
<dbReference type="InterPro" id="IPR036295">
    <property type="entry name" value="GlgS_sf"/>
</dbReference>
<dbReference type="NCBIfam" id="NF002793">
    <property type="entry name" value="PRK02922.1"/>
    <property type="match status" value="1"/>
</dbReference>
<dbReference type="Pfam" id="PF08971">
    <property type="entry name" value="GlgS"/>
    <property type="match status" value="1"/>
</dbReference>
<dbReference type="SUPFAM" id="SSF109747">
    <property type="entry name" value="Glycogen synthesis protein GlgS"/>
    <property type="match status" value="1"/>
</dbReference>
<feature type="chain" id="PRO_0000264147" description="Surface composition regulator">
    <location>
        <begin position="1"/>
        <end position="67"/>
    </location>
</feature>
<sequence>MNNNNVYSLNNFDFLARSFARMQAEGRPVDIQAVTGNMDEEHRDWFCKRYALYCQQATQAKKLELEH</sequence>
<reference key="1">
    <citation type="journal article" date="2004" name="Nat. Genet.">
        <title>Comparison of genome degradation in Paratyphi A and Typhi, human-restricted serovars of Salmonella enterica that cause typhoid.</title>
        <authorList>
            <person name="McClelland M."/>
            <person name="Sanderson K.E."/>
            <person name="Clifton S.W."/>
            <person name="Latreille P."/>
            <person name="Porwollik S."/>
            <person name="Sabo A."/>
            <person name="Meyer R."/>
            <person name="Bieri T."/>
            <person name="Ozersky P."/>
            <person name="McLellan M."/>
            <person name="Harkins C.R."/>
            <person name="Wang C."/>
            <person name="Nguyen C."/>
            <person name="Berghoff A."/>
            <person name="Elliott G."/>
            <person name="Kohlberg S."/>
            <person name="Strong C."/>
            <person name="Du F."/>
            <person name="Carter J."/>
            <person name="Kremizki C."/>
            <person name="Layman D."/>
            <person name="Leonard S."/>
            <person name="Sun H."/>
            <person name="Fulton L."/>
            <person name="Nash W."/>
            <person name="Miner T."/>
            <person name="Minx P."/>
            <person name="Delehaunty K."/>
            <person name="Fronick C."/>
            <person name="Magrini V."/>
            <person name="Nhan M."/>
            <person name="Warren W."/>
            <person name="Florea L."/>
            <person name="Spieth J."/>
            <person name="Wilson R.K."/>
        </authorList>
    </citation>
    <scope>NUCLEOTIDE SEQUENCE [LARGE SCALE GENOMIC DNA]</scope>
    <source>
        <strain>ATCC 9150 / SARB42</strain>
    </source>
</reference>
<evidence type="ECO:0000255" key="1">
    <source>
        <dbReference type="HAMAP-Rule" id="MF_00525"/>
    </source>
</evidence>
<protein>
    <recommendedName>
        <fullName evidence="1">Surface composition regulator</fullName>
    </recommendedName>
</protein>
<proteinExistence type="inferred from homology"/>